<protein>
    <recommendedName>
        <fullName evidence="1">Uridylate kinase</fullName>
        <shortName evidence="1">UK</shortName>
        <ecNumber evidence="1">2.7.4.22</ecNumber>
    </recommendedName>
    <alternativeName>
        <fullName evidence="1">Uridine monophosphate kinase</fullName>
        <shortName evidence="1">UMP kinase</shortName>
        <shortName evidence="1">UMPK</shortName>
    </alternativeName>
</protein>
<dbReference type="EC" id="2.7.4.22" evidence="1"/>
<dbReference type="EMBL" id="CP000316">
    <property type="protein sequence ID" value="ABE44609.1"/>
    <property type="molecule type" value="Genomic_DNA"/>
</dbReference>
<dbReference type="RefSeq" id="WP_011483607.1">
    <property type="nucleotide sequence ID" value="NC_007948.1"/>
</dbReference>
<dbReference type="SMR" id="Q12A33"/>
<dbReference type="STRING" id="296591.Bpro_2693"/>
<dbReference type="KEGG" id="pol:Bpro_2693"/>
<dbReference type="eggNOG" id="COG0528">
    <property type="taxonomic scope" value="Bacteria"/>
</dbReference>
<dbReference type="HOGENOM" id="CLU_033861_0_0_4"/>
<dbReference type="OrthoDB" id="9807458at2"/>
<dbReference type="UniPathway" id="UPA00159">
    <property type="reaction ID" value="UER00275"/>
</dbReference>
<dbReference type="Proteomes" id="UP000001983">
    <property type="component" value="Chromosome"/>
</dbReference>
<dbReference type="GO" id="GO:0005829">
    <property type="term" value="C:cytosol"/>
    <property type="evidence" value="ECO:0007669"/>
    <property type="project" value="TreeGrafter"/>
</dbReference>
<dbReference type="GO" id="GO:0005524">
    <property type="term" value="F:ATP binding"/>
    <property type="evidence" value="ECO:0007669"/>
    <property type="project" value="UniProtKB-KW"/>
</dbReference>
<dbReference type="GO" id="GO:0033862">
    <property type="term" value="F:UMP kinase activity"/>
    <property type="evidence" value="ECO:0007669"/>
    <property type="project" value="UniProtKB-EC"/>
</dbReference>
<dbReference type="GO" id="GO:0044210">
    <property type="term" value="P:'de novo' CTP biosynthetic process"/>
    <property type="evidence" value="ECO:0007669"/>
    <property type="project" value="UniProtKB-UniRule"/>
</dbReference>
<dbReference type="GO" id="GO:0006225">
    <property type="term" value="P:UDP biosynthetic process"/>
    <property type="evidence" value="ECO:0007669"/>
    <property type="project" value="TreeGrafter"/>
</dbReference>
<dbReference type="CDD" id="cd04254">
    <property type="entry name" value="AAK_UMPK-PyrH-Ec"/>
    <property type="match status" value="1"/>
</dbReference>
<dbReference type="FunFam" id="3.40.1160.10:FF:000001">
    <property type="entry name" value="Uridylate kinase"/>
    <property type="match status" value="1"/>
</dbReference>
<dbReference type="Gene3D" id="3.40.1160.10">
    <property type="entry name" value="Acetylglutamate kinase-like"/>
    <property type="match status" value="1"/>
</dbReference>
<dbReference type="HAMAP" id="MF_01220_B">
    <property type="entry name" value="PyrH_B"/>
    <property type="match status" value="1"/>
</dbReference>
<dbReference type="InterPro" id="IPR036393">
    <property type="entry name" value="AceGlu_kinase-like_sf"/>
</dbReference>
<dbReference type="InterPro" id="IPR001048">
    <property type="entry name" value="Asp/Glu/Uridylate_kinase"/>
</dbReference>
<dbReference type="InterPro" id="IPR011817">
    <property type="entry name" value="Uridylate_kinase"/>
</dbReference>
<dbReference type="InterPro" id="IPR015963">
    <property type="entry name" value="Uridylate_kinase_bac"/>
</dbReference>
<dbReference type="NCBIfam" id="TIGR02075">
    <property type="entry name" value="pyrH_bact"/>
    <property type="match status" value="1"/>
</dbReference>
<dbReference type="PANTHER" id="PTHR42833">
    <property type="entry name" value="URIDYLATE KINASE"/>
    <property type="match status" value="1"/>
</dbReference>
<dbReference type="PANTHER" id="PTHR42833:SF4">
    <property type="entry name" value="URIDYLATE KINASE PUMPKIN, CHLOROPLASTIC"/>
    <property type="match status" value="1"/>
</dbReference>
<dbReference type="Pfam" id="PF00696">
    <property type="entry name" value="AA_kinase"/>
    <property type="match status" value="1"/>
</dbReference>
<dbReference type="PIRSF" id="PIRSF005650">
    <property type="entry name" value="Uridylate_kin"/>
    <property type="match status" value="1"/>
</dbReference>
<dbReference type="SUPFAM" id="SSF53633">
    <property type="entry name" value="Carbamate kinase-like"/>
    <property type="match status" value="1"/>
</dbReference>
<evidence type="ECO:0000255" key="1">
    <source>
        <dbReference type="HAMAP-Rule" id="MF_01220"/>
    </source>
</evidence>
<reference key="1">
    <citation type="journal article" date="2008" name="Appl. Environ. Microbiol.">
        <title>The genome of Polaromonas sp. strain JS666: insights into the evolution of a hydrocarbon- and xenobiotic-degrading bacterium, and features of relevance to biotechnology.</title>
        <authorList>
            <person name="Mattes T.E."/>
            <person name="Alexander A.K."/>
            <person name="Richardson P.M."/>
            <person name="Munk A.C."/>
            <person name="Han C.S."/>
            <person name="Stothard P."/>
            <person name="Coleman N.V."/>
        </authorList>
    </citation>
    <scope>NUCLEOTIDE SEQUENCE [LARGE SCALE GENOMIC DNA]</scope>
    <source>
        <strain>JS666 / ATCC BAA-500</strain>
    </source>
</reference>
<sequence>MPAYKRILLKLSGEALMGDDAFGINHATIVRMVEEIAEVTRMGVQVAVVIGGGNIFRGVAGGSVGMDRATADYMGMLATVMNALALGDTMDKAGLIARVMSAIGIERVVEPYVRPKALQYLEEGKVVIFAAGTGNPFFTTDTAAALRGAEIGAEIVLKATKVDGVYTADPKKDPRATRYTNITFDEAMGKNLEVMDATAFALCRDQKLPIKVFSIFKHGALKRVVQGEDEGTLVHV</sequence>
<proteinExistence type="inferred from homology"/>
<name>PYRH_POLSJ</name>
<comment type="function">
    <text evidence="1">Catalyzes the reversible phosphorylation of UMP to UDP.</text>
</comment>
<comment type="catalytic activity">
    <reaction evidence="1">
        <text>UMP + ATP = UDP + ADP</text>
        <dbReference type="Rhea" id="RHEA:24400"/>
        <dbReference type="ChEBI" id="CHEBI:30616"/>
        <dbReference type="ChEBI" id="CHEBI:57865"/>
        <dbReference type="ChEBI" id="CHEBI:58223"/>
        <dbReference type="ChEBI" id="CHEBI:456216"/>
        <dbReference type="EC" id="2.7.4.22"/>
    </reaction>
</comment>
<comment type="activity regulation">
    <text evidence="1">Inhibited by UTP.</text>
</comment>
<comment type="pathway">
    <text evidence="1">Pyrimidine metabolism; CTP biosynthesis via de novo pathway; UDP from UMP (UMPK route): step 1/1.</text>
</comment>
<comment type="subunit">
    <text evidence="1">Homohexamer.</text>
</comment>
<comment type="subcellular location">
    <subcellularLocation>
        <location evidence="1">Cytoplasm</location>
    </subcellularLocation>
</comment>
<comment type="similarity">
    <text evidence="1">Belongs to the UMP kinase family.</text>
</comment>
<gene>
    <name evidence="1" type="primary">pyrH</name>
    <name type="ordered locus">Bpro_2693</name>
</gene>
<organism>
    <name type="scientific">Polaromonas sp. (strain JS666 / ATCC BAA-500)</name>
    <dbReference type="NCBI Taxonomy" id="296591"/>
    <lineage>
        <taxon>Bacteria</taxon>
        <taxon>Pseudomonadati</taxon>
        <taxon>Pseudomonadota</taxon>
        <taxon>Betaproteobacteria</taxon>
        <taxon>Burkholderiales</taxon>
        <taxon>Comamonadaceae</taxon>
        <taxon>Polaromonas</taxon>
    </lineage>
</organism>
<feature type="chain" id="PRO_1000053976" description="Uridylate kinase">
    <location>
        <begin position="1"/>
        <end position="236"/>
    </location>
</feature>
<feature type="binding site" evidence="1">
    <location>
        <begin position="10"/>
        <end position="13"/>
    </location>
    <ligand>
        <name>ATP</name>
        <dbReference type="ChEBI" id="CHEBI:30616"/>
    </ligand>
</feature>
<feature type="binding site" evidence="1">
    <location>
        <position position="52"/>
    </location>
    <ligand>
        <name>UMP</name>
        <dbReference type="ChEBI" id="CHEBI:57865"/>
    </ligand>
</feature>
<feature type="binding site" evidence="1">
    <location>
        <position position="53"/>
    </location>
    <ligand>
        <name>ATP</name>
        <dbReference type="ChEBI" id="CHEBI:30616"/>
    </ligand>
</feature>
<feature type="binding site" evidence="1">
    <location>
        <position position="57"/>
    </location>
    <ligand>
        <name>ATP</name>
        <dbReference type="ChEBI" id="CHEBI:30616"/>
    </ligand>
</feature>
<feature type="binding site" evidence="1">
    <location>
        <position position="72"/>
    </location>
    <ligand>
        <name>UMP</name>
        <dbReference type="ChEBI" id="CHEBI:57865"/>
    </ligand>
</feature>
<feature type="binding site" evidence="1">
    <location>
        <begin position="133"/>
        <end position="140"/>
    </location>
    <ligand>
        <name>UMP</name>
        <dbReference type="ChEBI" id="CHEBI:57865"/>
    </ligand>
</feature>
<feature type="binding site" evidence="1">
    <location>
        <position position="160"/>
    </location>
    <ligand>
        <name>ATP</name>
        <dbReference type="ChEBI" id="CHEBI:30616"/>
    </ligand>
</feature>
<feature type="binding site" evidence="1">
    <location>
        <position position="166"/>
    </location>
    <ligand>
        <name>ATP</name>
        <dbReference type="ChEBI" id="CHEBI:30616"/>
    </ligand>
</feature>
<feature type="binding site" evidence="1">
    <location>
        <position position="169"/>
    </location>
    <ligand>
        <name>ATP</name>
        <dbReference type="ChEBI" id="CHEBI:30616"/>
    </ligand>
</feature>
<keyword id="KW-0067">ATP-binding</keyword>
<keyword id="KW-0963">Cytoplasm</keyword>
<keyword id="KW-0418">Kinase</keyword>
<keyword id="KW-0547">Nucleotide-binding</keyword>
<keyword id="KW-0665">Pyrimidine biosynthesis</keyword>
<keyword id="KW-1185">Reference proteome</keyword>
<keyword id="KW-0808">Transferase</keyword>
<accession>Q12A33</accession>